<reference key="1">
    <citation type="journal article" date="1995" name="EMBO J.">
        <title>A novel type of myosin implicated in signalling by rho family GTPases.</title>
        <authorList>
            <person name="Reinhard J."/>
            <person name="Scheel A.A."/>
            <person name="Diekmann D."/>
            <person name="Hall A."/>
            <person name="Ruppert C."/>
            <person name="Baehler M."/>
        </authorList>
    </citation>
    <scope>NUCLEOTIDE SEQUENCE [MRNA]</scope>
    <scope>FUNCTION</scope>
    <source>
        <strain>Sprague-Dawley</strain>
        <tissue>Brain stem</tissue>
        <tissue>Spinal cord</tissue>
    </source>
</reference>
<reference key="2">
    <citation type="journal article" date="1998" name="J. Cell Sci.">
        <title>Myr 7 is a novel myosin IX-RhoGAP expressed in rat brain.</title>
        <authorList>
            <person name="Chieregatti E."/>
            <person name="Gaertner A."/>
            <person name="Stoeffler H.-E."/>
            <person name="Baehler M."/>
        </authorList>
    </citation>
    <scope>DEVELOPMENTAL STAGE</scope>
    <scope>TISSUE SPECIFICITY</scope>
</reference>
<reference key="3">
    <citation type="journal article" date="2012" name="Nat. Commun.">
        <title>Quantitative maps of protein phosphorylation sites across 14 different rat organs and tissues.</title>
        <authorList>
            <person name="Lundby A."/>
            <person name="Secher A."/>
            <person name="Lage K."/>
            <person name="Nordsborg N.B."/>
            <person name="Dmytriyev A."/>
            <person name="Lundby C."/>
            <person name="Olsen J.V."/>
        </authorList>
    </citation>
    <scope>PHOSPHORYLATION [LARGE SCALE ANALYSIS] AT SER-1046; SER-1177; SER-1220; SER-1222; SER-1229; SER-1237; SER-1247; SER-1266; THR-1319; SER-1952 AND SER-1959</scope>
    <scope>IDENTIFICATION BY MASS SPECTROMETRY [LARGE SCALE ANALYSIS]</scope>
</reference>
<accession>Q63358</accession>
<protein>
    <recommendedName>
        <fullName>Unconventional myosin-IXb</fullName>
    </recommendedName>
    <alternativeName>
        <fullName>Unconventional myosin-9b</fullName>
    </alternativeName>
</protein>
<comment type="function">
    <text evidence="1 10">Myosins are actin-based motor molecules with ATPase activity. Unconventional myosins serve in intracellular movements. Binds actin with high affinity both in the absence and presence of ATP and its mechanochemical activity is inhibited by calcium ions (By similarity). Also acts as a GTPase activator for RHOA (PubMed:7882973). Plays a role in the regulation of cell migration via its role as RHOA GTPase activator. This is regulated by its interaction with the SLIT2 receptor ROBO1; interaction with ROBO1 impairs interaction with RHOA and subsequent activation of RHOA GTPase activity, and thereby leads to increased levels of active, GTP-bound RHOA (By similarity).</text>
</comment>
<comment type="subunit">
    <text evidence="1">Interacts (via IQ domains) with CALM. Interacts with RHOA. Interacts (via Rho-GAP domain) with ROBO1; this inhibits the interaction with RHOA and the stimulation of RHOA GTPase activity, and thereby increases the levels of active RHOA.</text>
</comment>
<comment type="interaction">
    <interactant intactId="EBI-6251137">
        <id>Q63358</id>
    </interactant>
    <interactant intactId="EBI-6251168">
        <id>D4A631</id>
        <label>Arfgef1</label>
    </interactant>
    <organismsDiffer>false</organismsDiffer>
    <experiments>4</experiments>
</comment>
<comment type="subcellular location">
    <subcellularLocation>
        <location evidence="1">Cytoplasm</location>
        <location evidence="1">Cell cortex</location>
    </subcellularLocation>
    <subcellularLocation>
        <location evidence="1">Cytoplasm</location>
        <location evidence="1">Perinuclear region</location>
    </subcellularLocation>
    <subcellularLocation>
        <location evidence="1">Cytoplasm</location>
        <location evidence="1">Cytoskeleton</location>
    </subcellularLocation>
    <text evidence="1">In undifferentiated cells colocalizes with F-actin in the cell periphery while in differentiated cells its localization is cytoplasmic with the highest levels in the perinuclear region.</text>
</comment>
<comment type="tissue specificity">
    <text evidence="11">Expressed in testis, lung, thymus, brain, liver, spleen and heart muscle. Detected in lung, testis, spleen and liver, and at reduced level in different brain regions (at protein level).</text>
</comment>
<comment type="developmental stage">
    <text evidence="11">During forebrein development, it is expressed at higher levels in embryonic and early postnatal stages than in the adult forebrain.</text>
</comment>
<comment type="similarity">
    <text evidence="13">Belongs to the TRAFAC class myosin-kinesin ATPase superfamily. Myosin family.</text>
</comment>
<comment type="caution">
    <text evidence="13">Represents an unconventional myosin. This protein should not be confused with the conventional myosin-9 (MYH9).</text>
</comment>
<name>MYO9B_RAT</name>
<sequence length="1980" mass="225037">MSAHEAGSSGRRRPATFHLHIYPQLPSAGSQTSCRVTATKDSTTSDVIRDVVASLHLDGSKHYVLVEVKESGGEEWVLDASDSPVHRVLLWPRRAQKEHPREDGYYFLLQERNADGSIQYLHVQLLAQPTAACRLVERGLLPRPQADFDDLCNLPELNEANLLQSLKLRFVQQKIYTYAGSILVAINPFKFLPIYNPKYVKMYENQQLGKLEPHVFALADVAYYTMLRKHVNQCIVISGESGSGKTQSTNFLIHCLTALSQKGYASGVERTILGAGPVLEAFGNAKTAHNNNSSRFGKFIQVNYLESGIVRGAVVEKYLLEKSRLVSQEKDERNYHVFYYLLLGVSEEERQEFQLKQPQDYFYLNQHNLNIEDGEDLKHDFERLQQAMEMVGFLPATKKQIFSVLSAILYLGNVTYKKRATGRDEGLEVGPPEVLDTLSQLLKVKRETLVEVLTKRKTITVNDKLILPYSLSEAITARDSMAKSLYSALFDWIVLRINHALLNKKDMEEAVSCLSIGVLDIFGFEDFERNSFEQFCINYANEQLQYYFTQHIFKLEQEEYQGEGISWHNIDYTDNVGCIHLISKKPTGLFYLLDEESNFPHATSHTLLAKFKQQHEDNKYFLGTPVLEPAFIIQHFAGRVKYQIKDFREKNMDYMRPDIVALLRGSDSSYVRQLIGMDPVAVFRWAVLRAAIRAMAVLREAGRLRAERAEKAEAGVSSPVTRSHVEELPRGANTPSEKLYRDLHNQIIKSLKGLPWQGEDPRRLLQSLSRLQKPRTFFLKSKGIKQKQIIPKNLLDSKSLRLIISMTLHDRTTKSLLHLHKKKKPPSISAQFQTSLNKLLEALGKAEPFFIRCIRSNAEKKELCFDDELVLQQLRYTGMLETVRIRRSGYSAKYTFQDFTEQFQVLLPKDVQPCREAIAALLEKLQVDRQNYQIGKTKVFLKETERQALQERLHGEVLRRILLLQSWFRMVLERRHFVQMKHAALTIQACWRSYRVRRTLERTRAAVYLQAAWRGYLQRQAYHHQRHSIIRLQSLCRGHLQRRSFSQMMLEKQKAEQARETAGAEMSEGEPSPVAAGEQPSEHPVEDPESLGVETETWMNSKSPNGLSPKKEIPSPEMETPAQKTVPAESHEKVPSSREKRESRRQRGLEHVERQNKHIQSCREENSTLREPSRKASLETGESFPEDTKEPREDGLETWTETAAPSCPKQVPIVGDPPRSPSPLQRPASLDLDSRVSPVLPSSSLESPQDEDKGENSTKVQDKPESPSGSTQIQRYQHPDTERLATAVEIWRGKKLASAMLSQSLDLSEKPRTAGAALTPTEERRISFSTSDVSKLSPVKTSTEVDGDLSAKKPAGHKKKSEDPSAGPDAGLPTGSQGDSKSAFKRLFLHKAKDKKPSLEGVEETEGSGGQAAQEAPARKTLDVPSSQQHRHTTGEKPLKGKKNRNRKVGQITVSEKWRESVFRKITNANELKFLDEFLLNKVNDLRSQKTPIESLFIEATERFRSNIKTMYSVPNGKIHVGYKDLMENYQIVVSNLAAERGEKDTNLVLNVFQSLLDEFTRSYNKTDFEPVKGKAQKKKRKQERAVQEHNGHVFASYQVNIPQSCEQCLSYIWLMDKALLCSVCKMTCHKKCVHKIQSYCSYTGRRKSELGAEPGHFGVCVDSLTSDKASVPIVLEKLLEHVEMHGLYTEGLYRKSGAANRTRELRQALQTDPATVKLEDFPIHAITGVLKQWLRELPEPLMTFAQYGDFLRAVELPEKQEQLAAIYAVLDHLPEANHTSLERLIFHLVKVALLEDVNRMSPGALAIIFAPCLLRCPDNSDPLTSMKDVLKITTCVEMLIKEQMRKYKVKMEEINHLEAAESIAFRRLSLLRQNAPWPLKLGFSSPYEGVRTKSPRTPVVQDLEELGALPEEAAGGDEDREKEILMERIQSIKEEKEDITYRLPELDPRGSDEENLDSETSASTESLLEERAVRGAAEE</sequence>
<feature type="initiator methionine" description="Removed" evidence="1">
    <location>
        <position position="1"/>
    </location>
</feature>
<feature type="chain" id="PRO_0000123471" description="Unconventional myosin-IXb">
    <location>
        <begin position="2"/>
        <end position="1980"/>
    </location>
</feature>
<feature type="domain" description="Ras-associating" evidence="5">
    <location>
        <begin position="15"/>
        <end position="114"/>
    </location>
</feature>
<feature type="domain" description="Myosin motor" evidence="8">
    <location>
        <begin position="146"/>
        <end position="954"/>
    </location>
</feature>
<feature type="domain" description="IQ 1" evidence="4">
    <location>
        <begin position="958"/>
        <end position="978"/>
    </location>
</feature>
<feature type="domain" description="IQ 2" evidence="4">
    <location>
        <begin position="981"/>
        <end position="1001"/>
    </location>
</feature>
<feature type="domain" description="IQ 3" evidence="4">
    <location>
        <begin position="1002"/>
        <end position="1024"/>
    </location>
</feature>
<feature type="domain" description="IQ 4" evidence="4">
    <location>
        <begin position="1025"/>
        <end position="1054"/>
    </location>
</feature>
<feature type="domain" description="Rho-GAP" evidence="6">
    <location>
        <begin position="1663"/>
        <end position="1848"/>
    </location>
</feature>
<feature type="zinc finger region" description="Phorbol-ester/DAG-type" evidence="7">
    <location>
        <begin position="1592"/>
        <end position="1641"/>
    </location>
</feature>
<feature type="region of interest" description="Disordered" evidence="9">
    <location>
        <begin position="715"/>
        <end position="736"/>
    </location>
</feature>
<feature type="region of interest" description="Actin-binding">
    <location>
        <begin position="845"/>
        <end position="856"/>
    </location>
</feature>
<feature type="region of interest" description="Neck or regulatory domain">
    <location>
        <begin position="941"/>
        <end position="1045"/>
    </location>
</feature>
<feature type="region of interest" description="Tail">
    <location>
        <begin position="1046"/>
        <end position="1980"/>
    </location>
</feature>
<feature type="region of interest" description="Disordered" evidence="9">
    <location>
        <begin position="1049"/>
        <end position="1281"/>
    </location>
</feature>
<feature type="region of interest" description="Disordered" evidence="9">
    <location>
        <begin position="1302"/>
        <end position="1380"/>
    </location>
</feature>
<feature type="region of interest" description="Disordered" evidence="9">
    <location>
        <begin position="1394"/>
        <end position="1449"/>
    </location>
</feature>
<feature type="region of interest" description="Interaction with RHOA" evidence="1">
    <location>
        <begin position="1699"/>
        <end position="1704"/>
    </location>
</feature>
<feature type="region of interest" description="Disordered" evidence="9">
    <location>
        <begin position="1891"/>
        <end position="1923"/>
    </location>
</feature>
<feature type="region of interest" description="Disordered" evidence="9">
    <location>
        <begin position="1937"/>
        <end position="1980"/>
    </location>
</feature>
<feature type="coiled-coil region" evidence="3">
    <location>
        <begin position="1841"/>
        <end position="1861"/>
    </location>
</feature>
<feature type="coiled-coil region" evidence="3">
    <location>
        <begin position="1918"/>
        <end position="1948"/>
    </location>
</feature>
<feature type="compositionally biased region" description="Polar residues" evidence="9">
    <location>
        <begin position="1097"/>
        <end position="1106"/>
    </location>
</feature>
<feature type="compositionally biased region" description="Basic and acidic residues" evidence="9">
    <location>
        <begin position="1129"/>
        <end position="1177"/>
    </location>
</feature>
<feature type="compositionally biased region" description="Basic and acidic residues" evidence="9">
    <location>
        <begin position="1186"/>
        <end position="1195"/>
    </location>
</feature>
<feature type="compositionally biased region" description="Low complexity" evidence="9">
    <location>
        <begin position="1235"/>
        <end position="1247"/>
    </location>
</feature>
<feature type="compositionally biased region" description="Basic and acidic residues" evidence="9">
    <location>
        <begin position="1250"/>
        <end position="1265"/>
    </location>
</feature>
<feature type="compositionally biased region" description="Polar residues" evidence="9">
    <location>
        <begin position="1327"/>
        <end position="1344"/>
    </location>
</feature>
<feature type="compositionally biased region" description="Basic and acidic residues" evidence="9">
    <location>
        <begin position="1937"/>
        <end position="1953"/>
    </location>
</feature>
<feature type="compositionally biased region" description="Basic and acidic residues" evidence="9">
    <location>
        <begin position="1969"/>
        <end position="1980"/>
    </location>
</feature>
<feature type="binding site" evidence="3">
    <location>
        <begin position="239"/>
        <end position="246"/>
    </location>
    <ligand>
        <name>ATP</name>
        <dbReference type="ChEBI" id="CHEBI:30616"/>
    </ligand>
</feature>
<feature type="site" description="Arginine finger; crucial for GTP hydrolysis by stabilizing the transition state" evidence="6">
    <location>
        <position position="1695"/>
    </location>
</feature>
<feature type="modified residue" description="N-acetylserine" evidence="1">
    <location>
        <position position="2"/>
    </location>
</feature>
<feature type="modified residue" description="Phosphoserine" evidence="1">
    <location>
        <position position="717"/>
    </location>
</feature>
<feature type="modified residue" description="Phosphoserine" evidence="1">
    <location>
        <position position="718"/>
    </location>
</feature>
<feature type="modified residue" description="Phosphoserine" evidence="14">
    <location>
        <position position="1046"/>
    </location>
</feature>
<feature type="modified residue" description="Phosphoserine" evidence="1">
    <location>
        <position position="1108"/>
    </location>
</feature>
<feature type="modified residue" description="Phosphoserine" evidence="1">
    <location>
        <position position="1115"/>
    </location>
</feature>
<feature type="modified residue" description="Phosphoserine" evidence="14">
    <location>
        <position position="1177"/>
    </location>
</feature>
<feature type="modified residue" description="Phosphoserine" evidence="14">
    <location>
        <position position="1220"/>
    </location>
</feature>
<feature type="modified residue" description="Phosphoserine" evidence="14">
    <location>
        <position position="1222"/>
    </location>
</feature>
<feature type="modified residue" description="Phosphoserine" evidence="14">
    <location>
        <position position="1229"/>
    </location>
</feature>
<feature type="modified residue" description="Phosphoserine" evidence="14">
    <location>
        <position position="1237"/>
    </location>
</feature>
<feature type="modified residue" description="Phosphoserine" evidence="1">
    <location>
        <position position="1243"/>
    </location>
</feature>
<feature type="modified residue" description="Phosphoserine" evidence="14">
    <location>
        <position position="1247"/>
    </location>
</feature>
<feature type="modified residue" description="Phosphoserine" evidence="14">
    <location>
        <position position="1266"/>
    </location>
</feature>
<feature type="modified residue" description="Phosphoserine" evidence="2">
    <location>
        <position position="1268"/>
    </location>
</feature>
<feature type="modified residue" description="Phosphoserine" evidence="1">
    <location>
        <position position="1304"/>
    </location>
</feature>
<feature type="modified residue" description="Phosphothreonine" evidence="14">
    <location>
        <position position="1319"/>
    </location>
</feature>
<feature type="modified residue" description="Phosphoserine" evidence="1">
    <location>
        <position position="1327"/>
    </location>
</feature>
<feature type="modified residue" description="Phosphoserine" evidence="1">
    <location>
        <position position="1329"/>
    </location>
</feature>
<feature type="modified residue" description="Phosphoserine" evidence="2">
    <location>
        <position position="1337"/>
    </location>
</feature>
<feature type="modified residue" description="Phosphoserine" evidence="2">
    <location>
        <position position="1649"/>
    </location>
</feature>
<feature type="modified residue" description="Phosphoserine" evidence="1">
    <location>
        <position position="1886"/>
    </location>
</feature>
<feature type="modified residue" description="Phosphoserine" evidence="1">
    <location>
        <position position="1932"/>
    </location>
</feature>
<feature type="modified residue" description="Phosphoserine" evidence="14">
    <location>
        <position position="1952"/>
    </location>
</feature>
<feature type="modified residue" description="Phosphoserine" evidence="14">
    <location>
        <position position="1959"/>
    </location>
</feature>
<feature type="modified residue" description="Phosphothreonine" evidence="2">
    <location>
        <position position="1965"/>
    </location>
</feature>
<evidence type="ECO:0000250" key="1">
    <source>
        <dbReference type="UniProtKB" id="Q13459"/>
    </source>
</evidence>
<evidence type="ECO:0000250" key="2">
    <source>
        <dbReference type="UniProtKB" id="Q9QY06"/>
    </source>
</evidence>
<evidence type="ECO:0000255" key="3"/>
<evidence type="ECO:0000255" key="4">
    <source>
        <dbReference type="PROSITE-ProRule" id="PRU00116"/>
    </source>
</evidence>
<evidence type="ECO:0000255" key="5">
    <source>
        <dbReference type="PROSITE-ProRule" id="PRU00166"/>
    </source>
</evidence>
<evidence type="ECO:0000255" key="6">
    <source>
        <dbReference type="PROSITE-ProRule" id="PRU00172"/>
    </source>
</evidence>
<evidence type="ECO:0000255" key="7">
    <source>
        <dbReference type="PROSITE-ProRule" id="PRU00226"/>
    </source>
</evidence>
<evidence type="ECO:0000255" key="8">
    <source>
        <dbReference type="PROSITE-ProRule" id="PRU00782"/>
    </source>
</evidence>
<evidence type="ECO:0000256" key="9">
    <source>
        <dbReference type="SAM" id="MobiDB-lite"/>
    </source>
</evidence>
<evidence type="ECO:0000269" key="10">
    <source>
    </source>
</evidence>
<evidence type="ECO:0000269" key="11">
    <source>
    </source>
</evidence>
<evidence type="ECO:0000303" key="12">
    <source>
    </source>
</evidence>
<evidence type="ECO:0000305" key="13"/>
<evidence type="ECO:0007744" key="14">
    <source>
    </source>
</evidence>
<keyword id="KW-0007">Acetylation</keyword>
<keyword id="KW-0009">Actin-binding</keyword>
<keyword id="KW-0067">ATP-binding</keyword>
<keyword id="KW-0112">Calmodulin-binding</keyword>
<keyword id="KW-0175">Coiled coil</keyword>
<keyword id="KW-0963">Cytoplasm</keyword>
<keyword id="KW-0206">Cytoskeleton</keyword>
<keyword id="KW-0343">GTPase activation</keyword>
<keyword id="KW-0479">Metal-binding</keyword>
<keyword id="KW-0505">Motor protein</keyword>
<keyword id="KW-0518">Myosin</keyword>
<keyword id="KW-0547">Nucleotide-binding</keyword>
<keyword id="KW-0597">Phosphoprotein</keyword>
<keyword id="KW-1185">Reference proteome</keyword>
<keyword id="KW-0677">Repeat</keyword>
<keyword id="KW-0862">Zinc</keyword>
<keyword id="KW-0863">Zinc-finger</keyword>
<proteinExistence type="evidence at protein level"/>
<gene>
    <name type="primary">Myo9b</name>
    <name evidence="12" type="synonym">Myr5</name>
</gene>
<organism>
    <name type="scientific">Rattus norvegicus</name>
    <name type="common">Rat</name>
    <dbReference type="NCBI Taxonomy" id="10116"/>
    <lineage>
        <taxon>Eukaryota</taxon>
        <taxon>Metazoa</taxon>
        <taxon>Chordata</taxon>
        <taxon>Craniata</taxon>
        <taxon>Vertebrata</taxon>
        <taxon>Euteleostomi</taxon>
        <taxon>Mammalia</taxon>
        <taxon>Eutheria</taxon>
        <taxon>Euarchontoglires</taxon>
        <taxon>Glires</taxon>
        <taxon>Rodentia</taxon>
        <taxon>Myomorpha</taxon>
        <taxon>Muroidea</taxon>
        <taxon>Muridae</taxon>
        <taxon>Murinae</taxon>
        <taxon>Rattus</taxon>
    </lineage>
</organism>
<dbReference type="EMBL" id="X77609">
    <property type="protein sequence ID" value="CAA54700.1"/>
    <property type="molecule type" value="mRNA"/>
</dbReference>
<dbReference type="PIR" id="S54307">
    <property type="entry name" value="S54307"/>
</dbReference>
<dbReference type="SMR" id="Q63358"/>
<dbReference type="FunCoup" id="Q63358">
    <property type="interactions" value="1915"/>
</dbReference>
<dbReference type="IntAct" id="Q63358">
    <property type="interactions" value="16"/>
</dbReference>
<dbReference type="STRING" id="10116.ENSRNOP00000070646"/>
<dbReference type="iPTMnet" id="Q63358"/>
<dbReference type="PhosphoSitePlus" id="Q63358"/>
<dbReference type="jPOST" id="Q63358"/>
<dbReference type="PaxDb" id="10116-ENSRNOP00000048368"/>
<dbReference type="UCSC" id="RGD:3146">
    <property type="organism name" value="rat"/>
</dbReference>
<dbReference type="AGR" id="RGD:3146"/>
<dbReference type="RGD" id="3146">
    <property type="gene designation" value="Myo9b"/>
</dbReference>
<dbReference type="VEuPathDB" id="HostDB:ENSRNOG00000016256"/>
<dbReference type="eggNOG" id="KOG1453">
    <property type="taxonomic scope" value="Eukaryota"/>
</dbReference>
<dbReference type="eggNOG" id="KOG4229">
    <property type="taxonomic scope" value="Eukaryota"/>
</dbReference>
<dbReference type="HOGENOM" id="CLU_000192_2_2_1"/>
<dbReference type="InParanoid" id="Q63358"/>
<dbReference type="Reactome" id="R-RNO-2029482">
    <property type="pathway name" value="Regulation of actin dynamics for phagocytic cup formation"/>
</dbReference>
<dbReference type="Reactome" id="R-RNO-8980692">
    <property type="pathway name" value="RHOA GTPase cycle"/>
</dbReference>
<dbReference type="Reactome" id="R-RNO-8985586">
    <property type="pathway name" value="SLIT2:ROBO1 increases RHOA activity"/>
</dbReference>
<dbReference type="Reactome" id="R-RNO-9013026">
    <property type="pathway name" value="RHOB GTPase cycle"/>
</dbReference>
<dbReference type="Reactome" id="R-RNO-9013148">
    <property type="pathway name" value="CDC42 GTPase cycle"/>
</dbReference>
<dbReference type="Reactome" id="R-RNO-9013149">
    <property type="pathway name" value="RAC1 GTPase cycle"/>
</dbReference>
<dbReference type="Reactome" id="R-RNO-9035034">
    <property type="pathway name" value="RHOF GTPase cycle"/>
</dbReference>
<dbReference type="PRO" id="PR:Q63358"/>
<dbReference type="Proteomes" id="UP000002494">
    <property type="component" value="Chromosome 16"/>
</dbReference>
<dbReference type="Bgee" id="ENSRNOG00000016256">
    <property type="expression patterns" value="Expressed in spleen and 20 other cell types or tissues"/>
</dbReference>
<dbReference type="ExpressionAtlas" id="Q63358">
    <property type="expression patterns" value="baseline and differential"/>
</dbReference>
<dbReference type="GO" id="GO:0005884">
    <property type="term" value="C:actin filament"/>
    <property type="evidence" value="ECO:0000314"/>
    <property type="project" value="RGD"/>
</dbReference>
<dbReference type="GO" id="GO:0005938">
    <property type="term" value="C:cell cortex"/>
    <property type="evidence" value="ECO:0000250"/>
    <property type="project" value="UniProtKB"/>
</dbReference>
<dbReference type="GO" id="GO:0005737">
    <property type="term" value="C:cytoplasm"/>
    <property type="evidence" value="ECO:0000266"/>
    <property type="project" value="RGD"/>
</dbReference>
<dbReference type="GO" id="GO:0032433">
    <property type="term" value="C:filopodium tip"/>
    <property type="evidence" value="ECO:0000266"/>
    <property type="project" value="RGD"/>
</dbReference>
<dbReference type="GO" id="GO:0030027">
    <property type="term" value="C:lamellipodium"/>
    <property type="evidence" value="ECO:0000314"/>
    <property type="project" value="RGD"/>
</dbReference>
<dbReference type="GO" id="GO:0016459">
    <property type="term" value="C:myosin complex"/>
    <property type="evidence" value="ECO:0007669"/>
    <property type="project" value="UniProtKB-KW"/>
</dbReference>
<dbReference type="GO" id="GO:0048471">
    <property type="term" value="C:perinuclear region of cytoplasm"/>
    <property type="evidence" value="ECO:0000314"/>
    <property type="project" value="RGD"/>
</dbReference>
<dbReference type="GO" id="GO:0098871">
    <property type="term" value="C:postsynaptic actin cytoskeleton"/>
    <property type="evidence" value="ECO:0000266"/>
    <property type="project" value="RGD"/>
</dbReference>
<dbReference type="GO" id="GO:0001726">
    <property type="term" value="C:ruffle"/>
    <property type="evidence" value="ECO:0000314"/>
    <property type="project" value="RGD"/>
</dbReference>
<dbReference type="GO" id="GO:0003779">
    <property type="term" value="F:actin binding"/>
    <property type="evidence" value="ECO:0000314"/>
    <property type="project" value="RGD"/>
</dbReference>
<dbReference type="GO" id="GO:0051015">
    <property type="term" value="F:actin filament binding"/>
    <property type="evidence" value="ECO:0000314"/>
    <property type="project" value="RGD"/>
</dbReference>
<dbReference type="GO" id="GO:0043531">
    <property type="term" value="F:ADP binding"/>
    <property type="evidence" value="ECO:0000314"/>
    <property type="project" value="RGD"/>
</dbReference>
<dbReference type="GO" id="GO:0005524">
    <property type="term" value="F:ATP binding"/>
    <property type="evidence" value="ECO:0000314"/>
    <property type="project" value="RGD"/>
</dbReference>
<dbReference type="GO" id="GO:0016887">
    <property type="term" value="F:ATP hydrolysis activity"/>
    <property type="evidence" value="ECO:0000314"/>
    <property type="project" value="RGD"/>
</dbReference>
<dbReference type="GO" id="GO:0043008">
    <property type="term" value="F:ATP-dependent protein binding"/>
    <property type="evidence" value="ECO:0000314"/>
    <property type="project" value="RGD"/>
</dbReference>
<dbReference type="GO" id="GO:0005516">
    <property type="term" value="F:calmodulin binding"/>
    <property type="evidence" value="ECO:0000266"/>
    <property type="project" value="RGD"/>
</dbReference>
<dbReference type="GO" id="GO:0005096">
    <property type="term" value="F:GTPase activator activity"/>
    <property type="evidence" value="ECO:0000314"/>
    <property type="project" value="RGD"/>
</dbReference>
<dbReference type="GO" id="GO:0000146">
    <property type="term" value="F:microfilament motor activity"/>
    <property type="evidence" value="ECO:0000314"/>
    <property type="project" value="RGD"/>
</dbReference>
<dbReference type="GO" id="GO:0048495">
    <property type="term" value="F:Roundabout binding"/>
    <property type="evidence" value="ECO:0000266"/>
    <property type="project" value="RGD"/>
</dbReference>
<dbReference type="GO" id="GO:0031267">
    <property type="term" value="F:small GTPase binding"/>
    <property type="evidence" value="ECO:0000266"/>
    <property type="project" value="RGD"/>
</dbReference>
<dbReference type="GO" id="GO:0008270">
    <property type="term" value="F:zinc ion binding"/>
    <property type="evidence" value="ECO:0000314"/>
    <property type="project" value="RGD"/>
</dbReference>
<dbReference type="GO" id="GO:0030048">
    <property type="term" value="P:actin filament-based movement"/>
    <property type="evidence" value="ECO:0000250"/>
    <property type="project" value="UniProtKB"/>
</dbReference>
<dbReference type="GO" id="GO:0030010">
    <property type="term" value="P:establishment of cell polarity"/>
    <property type="evidence" value="ECO:0000266"/>
    <property type="project" value="RGD"/>
</dbReference>
<dbReference type="GO" id="GO:0072673">
    <property type="term" value="P:lamellipodium morphogenesis"/>
    <property type="evidence" value="ECO:0000266"/>
    <property type="project" value="RGD"/>
</dbReference>
<dbReference type="GO" id="GO:0048246">
    <property type="term" value="P:macrophage chemotaxis"/>
    <property type="evidence" value="ECO:0000266"/>
    <property type="project" value="RGD"/>
</dbReference>
<dbReference type="GO" id="GO:0002548">
    <property type="term" value="P:monocyte chemotaxis"/>
    <property type="evidence" value="ECO:0000266"/>
    <property type="project" value="RGD"/>
</dbReference>
<dbReference type="GO" id="GO:0035023">
    <property type="term" value="P:regulation of Rho protein signal transduction"/>
    <property type="evidence" value="ECO:0000250"/>
    <property type="project" value="UniProtKB"/>
</dbReference>
<dbReference type="GO" id="GO:0007266">
    <property type="term" value="P:Rho protein signal transduction"/>
    <property type="evidence" value="ECO:0000314"/>
    <property type="project" value="RGD"/>
</dbReference>
<dbReference type="GO" id="GO:0035385">
    <property type="term" value="P:Roundabout signaling pathway"/>
    <property type="evidence" value="ECO:0000250"/>
    <property type="project" value="UniProtKB"/>
</dbReference>
<dbReference type="CDD" id="cd20884">
    <property type="entry name" value="C1_Myosin-IXb"/>
    <property type="match status" value="1"/>
</dbReference>
<dbReference type="CDD" id="cd23767">
    <property type="entry name" value="IQCD"/>
    <property type="match status" value="1"/>
</dbReference>
<dbReference type="CDD" id="cd01385">
    <property type="entry name" value="MYSc_Myo9"/>
    <property type="match status" value="1"/>
</dbReference>
<dbReference type="CDD" id="cd04407">
    <property type="entry name" value="RhoGAP_myosin_IXB"/>
    <property type="match status" value="1"/>
</dbReference>
<dbReference type="FunFam" id="1.20.120.720:FF:000003">
    <property type="entry name" value="Putative unconventional myosin-IXa"/>
    <property type="match status" value="1"/>
</dbReference>
<dbReference type="FunFam" id="3.30.60.20:FF:000020">
    <property type="entry name" value="Putative unconventional myosin-IXa"/>
    <property type="match status" value="1"/>
</dbReference>
<dbReference type="FunFam" id="3.40.850.10:FF:000008">
    <property type="entry name" value="Putative unconventional myosin-IXa"/>
    <property type="match status" value="1"/>
</dbReference>
<dbReference type="FunFam" id="1.10.10.820:FF:000003">
    <property type="entry name" value="unconventional myosin-IXa isoform X1"/>
    <property type="match status" value="1"/>
</dbReference>
<dbReference type="FunFam" id="1.10.555.10:FF:000009">
    <property type="entry name" value="unconventional myosin-IXa isoform X1"/>
    <property type="match status" value="1"/>
</dbReference>
<dbReference type="FunFam" id="1.20.58.530:FF:000005">
    <property type="entry name" value="unconventional myosin-IXa isoform X1"/>
    <property type="match status" value="1"/>
</dbReference>
<dbReference type="FunFam" id="3.40.850.10:FF:000013">
    <property type="entry name" value="unconventional myosin-IXa isoform X1"/>
    <property type="match status" value="1"/>
</dbReference>
<dbReference type="FunFam" id="1.20.5.190:FF:000013">
    <property type="entry name" value="unconventional myosin-IXa isoform X2"/>
    <property type="match status" value="1"/>
</dbReference>
<dbReference type="FunFam" id="1.20.58.530:FF:000009">
    <property type="entry name" value="unconventional myosin-IXb isoform X1"/>
    <property type="match status" value="1"/>
</dbReference>
<dbReference type="Gene3D" id="1.10.10.820">
    <property type="match status" value="1"/>
</dbReference>
<dbReference type="Gene3D" id="1.20.5.190">
    <property type="match status" value="2"/>
</dbReference>
<dbReference type="Gene3D" id="1.20.58.530">
    <property type="match status" value="2"/>
</dbReference>
<dbReference type="Gene3D" id="3.30.60.20">
    <property type="match status" value="1"/>
</dbReference>
<dbReference type="Gene3D" id="6.20.240.20">
    <property type="match status" value="1"/>
</dbReference>
<dbReference type="Gene3D" id="3.40.850.10">
    <property type="entry name" value="Kinesin motor domain"/>
    <property type="match status" value="2"/>
</dbReference>
<dbReference type="Gene3D" id="1.20.120.720">
    <property type="entry name" value="Myosin VI head, motor domain, U50 subdomain"/>
    <property type="match status" value="1"/>
</dbReference>
<dbReference type="Gene3D" id="1.10.555.10">
    <property type="entry name" value="Rho GTPase activation protein"/>
    <property type="match status" value="1"/>
</dbReference>
<dbReference type="InterPro" id="IPR046349">
    <property type="entry name" value="C1-like_sf"/>
</dbReference>
<dbReference type="InterPro" id="IPR000048">
    <property type="entry name" value="IQ_motif_EF-hand-BS"/>
</dbReference>
<dbReference type="InterPro" id="IPR036961">
    <property type="entry name" value="Kinesin_motor_dom_sf"/>
</dbReference>
<dbReference type="InterPro" id="IPR046987">
    <property type="entry name" value="Myo9"/>
</dbReference>
<dbReference type="InterPro" id="IPR001609">
    <property type="entry name" value="Myosin_head_motor_dom-like"/>
</dbReference>
<dbReference type="InterPro" id="IPR036023">
    <property type="entry name" value="MYSc_Myo9"/>
</dbReference>
<dbReference type="InterPro" id="IPR027417">
    <property type="entry name" value="P-loop_NTPase"/>
</dbReference>
<dbReference type="InterPro" id="IPR002219">
    <property type="entry name" value="PE/DAG-bd"/>
</dbReference>
<dbReference type="InterPro" id="IPR000159">
    <property type="entry name" value="RA_dom"/>
</dbReference>
<dbReference type="InterPro" id="IPR008936">
    <property type="entry name" value="Rho_GTPase_activation_prot"/>
</dbReference>
<dbReference type="InterPro" id="IPR000198">
    <property type="entry name" value="RhoGAP_dom"/>
</dbReference>
<dbReference type="InterPro" id="IPR028557">
    <property type="entry name" value="RhoGAP_myosin_IXB"/>
</dbReference>
<dbReference type="InterPro" id="IPR029071">
    <property type="entry name" value="Ubiquitin-like_domsf"/>
</dbReference>
<dbReference type="PANTHER" id="PTHR46184:SF2">
    <property type="entry name" value="UNCONVENTIONAL MYOSIN-IXB"/>
    <property type="match status" value="1"/>
</dbReference>
<dbReference type="PANTHER" id="PTHR46184">
    <property type="entry name" value="UNCONVENTIONAL MYOSIN-IXB-LIKE PROTEIN"/>
    <property type="match status" value="1"/>
</dbReference>
<dbReference type="Pfam" id="PF00130">
    <property type="entry name" value="C1_1"/>
    <property type="match status" value="1"/>
</dbReference>
<dbReference type="Pfam" id="PF00612">
    <property type="entry name" value="IQ"/>
    <property type="match status" value="4"/>
</dbReference>
<dbReference type="Pfam" id="PF00063">
    <property type="entry name" value="Myosin_head"/>
    <property type="match status" value="2"/>
</dbReference>
<dbReference type="Pfam" id="PF00788">
    <property type="entry name" value="RA"/>
    <property type="match status" value="1"/>
</dbReference>
<dbReference type="Pfam" id="PF00620">
    <property type="entry name" value="RhoGAP"/>
    <property type="match status" value="1"/>
</dbReference>
<dbReference type="PRINTS" id="PR00193">
    <property type="entry name" value="MYOSINHEAVY"/>
</dbReference>
<dbReference type="SMART" id="SM00109">
    <property type="entry name" value="C1"/>
    <property type="match status" value="1"/>
</dbReference>
<dbReference type="SMART" id="SM00015">
    <property type="entry name" value="IQ"/>
    <property type="match status" value="4"/>
</dbReference>
<dbReference type="SMART" id="SM00242">
    <property type="entry name" value="MYSc"/>
    <property type="match status" value="1"/>
</dbReference>
<dbReference type="SMART" id="SM00314">
    <property type="entry name" value="RA"/>
    <property type="match status" value="1"/>
</dbReference>
<dbReference type="SMART" id="SM00324">
    <property type="entry name" value="RhoGAP"/>
    <property type="match status" value="1"/>
</dbReference>
<dbReference type="SUPFAM" id="SSF57889">
    <property type="entry name" value="Cysteine-rich domain"/>
    <property type="match status" value="1"/>
</dbReference>
<dbReference type="SUPFAM" id="SSF48350">
    <property type="entry name" value="GTPase activation domain, GAP"/>
    <property type="match status" value="1"/>
</dbReference>
<dbReference type="SUPFAM" id="SSF52540">
    <property type="entry name" value="P-loop containing nucleoside triphosphate hydrolases"/>
    <property type="match status" value="2"/>
</dbReference>
<dbReference type="SUPFAM" id="SSF54236">
    <property type="entry name" value="Ubiquitin-like"/>
    <property type="match status" value="1"/>
</dbReference>
<dbReference type="PROSITE" id="PS50096">
    <property type="entry name" value="IQ"/>
    <property type="match status" value="3"/>
</dbReference>
<dbReference type="PROSITE" id="PS51456">
    <property type="entry name" value="MYOSIN_MOTOR"/>
    <property type="match status" value="1"/>
</dbReference>
<dbReference type="PROSITE" id="PS50200">
    <property type="entry name" value="RA"/>
    <property type="match status" value="1"/>
</dbReference>
<dbReference type="PROSITE" id="PS50238">
    <property type="entry name" value="RHOGAP"/>
    <property type="match status" value="1"/>
</dbReference>
<dbReference type="PROSITE" id="PS00479">
    <property type="entry name" value="ZF_DAG_PE_1"/>
    <property type="match status" value="1"/>
</dbReference>
<dbReference type="PROSITE" id="PS50081">
    <property type="entry name" value="ZF_DAG_PE_2"/>
    <property type="match status" value="1"/>
</dbReference>